<organism>
    <name type="scientific">Shewanella pealeana (strain ATCC 700345 / ANG-SQ1)</name>
    <dbReference type="NCBI Taxonomy" id="398579"/>
    <lineage>
        <taxon>Bacteria</taxon>
        <taxon>Pseudomonadati</taxon>
        <taxon>Pseudomonadota</taxon>
        <taxon>Gammaproteobacteria</taxon>
        <taxon>Alteromonadales</taxon>
        <taxon>Shewanellaceae</taxon>
        <taxon>Shewanella</taxon>
    </lineage>
</organism>
<feature type="chain" id="PRO_1000085992" description="Small ribosomal subunit protein uS4">
    <location>
        <begin position="1"/>
        <end position="206"/>
    </location>
</feature>
<feature type="domain" description="S4 RNA-binding" evidence="1">
    <location>
        <begin position="96"/>
        <end position="156"/>
    </location>
</feature>
<dbReference type="EMBL" id="CP000851">
    <property type="protein sequence ID" value="ABV85536.1"/>
    <property type="molecule type" value="Genomic_DNA"/>
</dbReference>
<dbReference type="RefSeq" id="WP_012153477.1">
    <property type="nucleotide sequence ID" value="NC_009901.1"/>
</dbReference>
<dbReference type="SMR" id="A8GYZ9"/>
<dbReference type="STRING" id="398579.Spea_0208"/>
<dbReference type="KEGG" id="spl:Spea_0208"/>
<dbReference type="eggNOG" id="COG0522">
    <property type="taxonomic scope" value="Bacteria"/>
</dbReference>
<dbReference type="HOGENOM" id="CLU_092403_0_2_6"/>
<dbReference type="OrthoDB" id="9803672at2"/>
<dbReference type="Proteomes" id="UP000002608">
    <property type="component" value="Chromosome"/>
</dbReference>
<dbReference type="GO" id="GO:0015935">
    <property type="term" value="C:small ribosomal subunit"/>
    <property type="evidence" value="ECO:0007669"/>
    <property type="project" value="InterPro"/>
</dbReference>
<dbReference type="GO" id="GO:0019843">
    <property type="term" value="F:rRNA binding"/>
    <property type="evidence" value="ECO:0007669"/>
    <property type="project" value="UniProtKB-UniRule"/>
</dbReference>
<dbReference type="GO" id="GO:0003735">
    <property type="term" value="F:structural constituent of ribosome"/>
    <property type="evidence" value="ECO:0007669"/>
    <property type="project" value="InterPro"/>
</dbReference>
<dbReference type="GO" id="GO:0042274">
    <property type="term" value="P:ribosomal small subunit biogenesis"/>
    <property type="evidence" value="ECO:0007669"/>
    <property type="project" value="TreeGrafter"/>
</dbReference>
<dbReference type="GO" id="GO:0006412">
    <property type="term" value="P:translation"/>
    <property type="evidence" value="ECO:0007669"/>
    <property type="project" value="UniProtKB-UniRule"/>
</dbReference>
<dbReference type="CDD" id="cd00165">
    <property type="entry name" value="S4"/>
    <property type="match status" value="1"/>
</dbReference>
<dbReference type="FunFam" id="1.10.1050.10:FF:000001">
    <property type="entry name" value="30S ribosomal protein S4"/>
    <property type="match status" value="1"/>
</dbReference>
<dbReference type="FunFam" id="3.10.290.10:FF:000001">
    <property type="entry name" value="30S ribosomal protein S4"/>
    <property type="match status" value="1"/>
</dbReference>
<dbReference type="Gene3D" id="1.10.1050.10">
    <property type="entry name" value="Ribosomal Protein S4 Delta 41, Chain A, domain 1"/>
    <property type="match status" value="1"/>
</dbReference>
<dbReference type="Gene3D" id="3.10.290.10">
    <property type="entry name" value="RNA-binding S4 domain"/>
    <property type="match status" value="1"/>
</dbReference>
<dbReference type="HAMAP" id="MF_01306_B">
    <property type="entry name" value="Ribosomal_uS4_B"/>
    <property type="match status" value="1"/>
</dbReference>
<dbReference type="InterPro" id="IPR022801">
    <property type="entry name" value="Ribosomal_uS4"/>
</dbReference>
<dbReference type="InterPro" id="IPR005709">
    <property type="entry name" value="Ribosomal_uS4_bac-type"/>
</dbReference>
<dbReference type="InterPro" id="IPR018079">
    <property type="entry name" value="Ribosomal_uS4_CS"/>
</dbReference>
<dbReference type="InterPro" id="IPR001912">
    <property type="entry name" value="Ribosomal_uS4_N"/>
</dbReference>
<dbReference type="InterPro" id="IPR002942">
    <property type="entry name" value="S4_RNA-bd"/>
</dbReference>
<dbReference type="InterPro" id="IPR036986">
    <property type="entry name" value="S4_RNA-bd_sf"/>
</dbReference>
<dbReference type="NCBIfam" id="NF003717">
    <property type="entry name" value="PRK05327.1"/>
    <property type="match status" value="1"/>
</dbReference>
<dbReference type="NCBIfam" id="TIGR01017">
    <property type="entry name" value="rpsD_bact"/>
    <property type="match status" value="1"/>
</dbReference>
<dbReference type="PANTHER" id="PTHR11831">
    <property type="entry name" value="30S 40S RIBOSOMAL PROTEIN"/>
    <property type="match status" value="1"/>
</dbReference>
<dbReference type="PANTHER" id="PTHR11831:SF4">
    <property type="entry name" value="SMALL RIBOSOMAL SUBUNIT PROTEIN US4M"/>
    <property type="match status" value="1"/>
</dbReference>
<dbReference type="Pfam" id="PF00163">
    <property type="entry name" value="Ribosomal_S4"/>
    <property type="match status" value="1"/>
</dbReference>
<dbReference type="Pfam" id="PF01479">
    <property type="entry name" value="S4"/>
    <property type="match status" value="1"/>
</dbReference>
<dbReference type="SMART" id="SM01390">
    <property type="entry name" value="Ribosomal_S4"/>
    <property type="match status" value="1"/>
</dbReference>
<dbReference type="SMART" id="SM00363">
    <property type="entry name" value="S4"/>
    <property type="match status" value="1"/>
</dbReference>
<dbReference type="SUPFAM" id="SSF55174">
    <property type="entry name" value="Alpha-L RNA-binding motif"/>
    <property type="match status" value="1"/>
</dbReference>
<dbReference type="PROSITE" id="PS00632">
    <property type="entry name" value="RIBOSOMAL_S4"/>
    <property type="match status" value="1"/>
</dbReference>
<dbReference type="PROSITE" id="PS50889">
    <property type="entry name" value="S4"/>
    <property type="match status" value="1"/>
</dbReference>
<protein>
    <recommendedName>
        <fullName evidence="1">Small ribosomal subunit protein uS4</fullName>
    </recommendedName>
    <alternativeName>
        <fullName evidence="2">30S ribosomal protein S4</fullName>
    </alternativeName>
</protein>
<comment type="function">
    <text evidence="1">One of the primary rRNA binding proteins, it binds directly to 16S rRNA where it nucleates assembly of the body of the 30S subunit.</text>
</comment>
<comment type="function">
    <text evidence="1">With S5 and S12 plays an important role in translational accuracy.</text>
</comment>
<comment type="subunit">
    <text evidence="1">Part of the 30S ribosomal subunit. Contacts protein S5. The interaction surface between S4 and S5 is involved in control of translational fidelity.</text>
</comment>
<comment type="similarity">
    <text evidence="1">Belongs to the universal ribosomal protein uS4 family.</text>
</comment>
<proteinExistence type="inferred from homology"/>
<evidence type="ECO:0000255" key="1">
    <source>
        <dbReference type="HAMAP-Rule" id="MF_01306"/>
    </source>
</evidence>
<evidence type="ECO:0000305" key="2"/>
<keyword id="KW-1185">Reference proteome</keyword>
<keyword id="KW-0687">Ribonucleoprotein</keyword>
<keyword id="KW-0689">Ribosomal protein</keyword>
<keyword id="KW-0694">RNA-binding</keyword>
<keyword id="KW-0699">rRNA-binding</keyword>
<reference key="1">
    <citation type="submission" date="2007-10" db="EMBL/GenBank/DDBJ databases">
        <title>Complete sequence of Shewanella pealeana ATCC 700345.</title>
        <authorList>
            <consortium name="US DOE Joint Genome Institute"/>
            <person name="Copeland A."/>
            <person name="Lucas S."/>
            <person name="Lapidus A."/>
            <person name="Barry K."/>
            <person name="Glavina del Rio T."/>
            <person name="Dalin E."/>
            <person name="Tice H."/>
            <person name="Pitluck S."/>
            <person name="Chertkov O."/>
            <person name="Brettin T."/>
            <person name="Bruce D."/>
            <person name="Detter J.C."/>
            <person name="Han C."/>
            <person name="Schmutz J."/>
            <person name="Larimer F."/>
            <person name="Land M."/>
            <person name="Hauser L."/>
            <person name="Kyrpides N."/>
            <person name="Kim E."/>
            <person name="Zhao J.-S.Z."/>
            <person name="Manno D."/>
            <person name="Hawari J."/>
            <person name="Richardson P."/>
        </authorList>
    </citation>
    <scope>NUCLEOTIDE SEQUENCE [LARGE SCALE GENOMIC DNA]</scope>
    <source>
        <strain>ATCC 700345 / ANG-SQ1</strain>
    </source>
</reference>
<gene>
    <name evidence="1" type="primary">rpsD</name>
    <name type="ordered locus">Spea_0208</name>
</gene>
<accession>A8GYZ9</accession>
<sequence>MARYLGPKLKLSRREGTDLFLKSGVRAIDSKCKLETAPGQHGARKTRLSEYGVQLREKQKVRRIYGVLEKQFRNYYKDAARTKGNTGENLLTLLETRLDNVVYRMGFGATRAESRQLVSHKSIMVNGSVVNIPSFKVSANDVVSVREKSRTQARIKAALEVSAQREKPTWVEVDNTKMEGAFKRIPERSDLSAEINEQLIVELYSK</sequence>
<name>RS4_SHEPA</name>